<keyword id="KW-0067">ATP-binding</keyword>
<keyword id="KW-0547">Nucleotide-binding</keyword>
<keyword id="KW-1185">Reference proteome</keyword>
<evidence type="ECO:0000255" key="1">
    <source>
        <dbReference type="PROSITE-ProRule" id="PRU00159"/>
    </source>
</evidence>
<evidence type="ECO:0000256" key="2">
    <source>
        <dbReference type="SAM" id="MobiDB-lite"/>
    </source>
</evidence>
<organism>
    <name type="scientific">Dictyostelium discoideum</name>
    <name type="common">Social amoeba</name>
    <dbReference type="NCBI Taxonomy" id="44689"/>
    <lineage>
        <taxon>Eukaryota</taxon>
        <taxon>Amoebozoa</taxon>
        <taxon>Evosea</taxon>
        <taxon>Eumycetozoa</taxon>
        <taxon>Dictyostelia</taxon>
        <taxon>Dictyosteliales</taxon>
        <taxon>Dictyosteliaceae</taxon>
        <taxon>Dictyostelium</taxon>
    </lineage>
</organism>
<protein>
    <recommendedName>
        <fullName>Probable inactive serine/threonine-protein kinase DDB_G0293746</fullName>
    </recommendedName>
</protein>
<accession>Q54BD1</accession>
<dbReference type="EMBL" id="AAFI02000219">
    <property type="protein sequence ID" value="EAL60550.1"/>
    <property type="molecule type" value="Genomic_DNA"/>
</dbReference>
<dbReference type="RefSeq" id="XP_628963.1">
    <property type="nucleotide sequence ID" value="XM_628961.1"/>
</dbReference>
<dbReference type="FunCoup" id="Q54BD1">
    <property type="interactions" value="644"/>
</dbReference>
<dbReference type="PaxDb" id="44689-DDB0229346"/>
<dbReference type="EnsemblProtists" id="EAL60550">
    <property type="protein sequence ID" value="EAL60550"/>
    <property type="gene ID" value="DDB_G0293746"/>
</dbReference>
<dbReference type="GeneID" id="8629391"/>
<dbReference type="KEGG" id="ddi:DDB_G0293746"/>
<dbReference type="dictyBase" id="DDB_G0293746"/>
<dbReference type="VEuPathDB" id="AmoebaDB:DDB_G0293746"/>
<dbReference type="eggNOG" id="ENOG502REWG">
    <property type="taxonomic scope" value="Eukaryota"/>
</dbReference>
<dbReference type="HOGENOM" id="CLU_699139_0_0_1"/>
<dbReference type="InParanoid" id="Q54BD1"/>
<dbReference type="OMA" id="DRHQSRN"/>
<dbReference type="PRO" id="PR:Q54BD1"/>
<dbReference type="Proteomes" id="UP000002195">
    <property type="component" value="Chromosome 6"/>
</dbReference>
<dbReference type="GO" id="GO:0005524">
    <property type="term" value="F:ATP binding"/>
    <property type="evidence" value="ECO:0007669"/>
    <property type="project" value="UniProtKB-KW"/>
</dbReference>
<dbReference type="GO" id="GO:0004672">
    <property type="term" value="F:protein kinase activity"/>
    <property type="evidence" value="ECO:0007669"/>
    <property type="project" value="InterPro"/>
</dbReference>
<dbReference type="Gene3D" id="1.10.510.10">
    <property type="entry name" value="Transferase(Phosphotransferase) domain 1"/>
    <property type="match status" value="1"/>
</dbReference>
<dbReference type="InterPro" id="IPR011009">
    <property type="entry name" value="Kinase-like_dom_sf"/>
</dbReference>
<dbReference type="InterPro" id="IPR000719">
    <property type="entry name" value="Prot_kinase_dom"/>
</dbReference>
<dbReference type="PANTHER" id="PTHR34495:SF4">
    <property type="entry name" value="UNC-51 LIKE AUTOPHAGY ACTIVATING KINASE 1A"/>
    <property type="match status" value="1"/>
</dbReference>
<dbReference type="PANTHER" id="PTHR34495">
    <property type="entry name" value="UNC-51-LIKE AUTOPHAGY-ACTIVATING KINASE 1A"/>
    <property type="match status" value="1"/>
</dbReference>
<dbReference type="SMART" id="SM00220">
    <property type="entry name" value="S_TKc"/>
    <property type="match status" value="1"/>
</dbReference>
<dbReference type="SUPFAM" id="SSF56112">
    <property type="entry name" value="Protein kinase-like (PK-like)"/>
    <property type="match status" value="1"/>
</dbReference>
<dbReference type="PROSITE" id="PS50011">
    <property type="entry name" value="PROTEIN_KINASE_DOM"/>
    <property type="match status" value="1"/>
</dbReference>
<gene>
    <name type="ORF">DDB_G0293746</name>
</gene>
<sequence>MNENSISQYSEIDLISDNPFKNYFVVEKLLNNNNNNINDTIGNNHYSNNNNNNKFLNNNNKNKINKKQIILKVQKKSNKAMKELTVMQKIGYYSNHVVNVYGYFNLKGCDRMLKPRLLSDNDELIFMECEDMGQYQTLEMIIERRKCKGSLVMTRFIMRGILASAYYFESHQVIHQTLHPGNIYILEDSLGTDDQSVVKFSNLEHCLLIGSTNSSLSSLSSSTSSSSSSSSSTNCNNNTTENNNNNYNNNNNNNNNNNNNNNNNSLNDRFVLGKDSVCYSIYSDRHQSRNLFKVVSSNTVSFTVGIIYLELLLSTIYDHVFPNEEYINSLREIVRNGKLDIYTNQATNTKYFRFNQNHQIEITDLIKDDISLILTLLQDSSTRPTITQFIIDYLF</sequence>
<feature type="chain" id="PRO_0000362052" description="Probable inactive serine/threonine-protein kinase DDB_G0293746">
    <location>
        <begin position="1"/>
        <end position="395"/>
    </location>
</feature>
<feature type="domain" description="Protein kinase" evidence="1">
    <location>
        <begin position="9"/>
        <end position="395"/>
    </location>
</feature>
<feature type="region of interest" description="Disordered" evidence="2">
    <location>
        <begin position="213"/>
        <end position="266"/>
    </location>
</feature>
<feature type="binding site" evidence="1">
    <location>
        <begin position="15"/>
        <end position="23"/>
    </location>
    <ligand>
        <name>ATP</name>
        <dbReference type="ChEBI" id="CHEBI:30616"/>
    </ligand>
</feature>
<feature type="binding site" evidence="1">
    <location>
        <position position="54"/>
    </location>
    <ligand>
        <name>ATP</name>
        <dbReference type="ChEBI" id="CHEBI:30616"/>
    </ligand>
</feature>
<comment type="domain">
    <text>The protein kinase domain is predicted to be catalytically inactive.</text>
</comment>
<comment type="similarity">
    <text evidence="1">Belongs to the protein kinase superfamily. Ser/Thr protein kinase family.</text>
</comment>
<proteinExistence type="inferred from homology"/>
<name>Y3746_DICDI</name>
<reference key="1">
    <citation type="journal article" date="2005" name="Nature">
        <title>The genome of the social amoeba Dictyostelium discoideum.</title>
        <authorList>
            <person name="Eichinger L."/>
            <person name="Pachebat J.A."/>
            <person name="Gloeckner G."/>
            <person name="Rajandream M.A."/>
            <person name="Sucgang R."/>
            <person name="Berriman M."/>
            <person name="Song J."/>
            <person name="Olsen R."/>
            <person name="Szafranski K."/>
            <person name="Xu Q."/>
            <person name="Tunggal B."/>
            <person name="Kummerfeld S."/>
            <person name="Madera M."/>
            <person name="Konfortov B.A."/>
            <person name="Rivero F."/>
            <person name="Bankier A.T."/>
            <person name="Lehmann R."/>
            <person name="Hamlin N."/>
            <person name="Davies R."/>
            <person name="Gaudet P."/>
            <person name="Fey P."/>
            <person name="Pilcher K."/>
            <person name="Chen G."/>
            <person name="Saunders D."/>
            <person name="Sodergren E.J."/>
            <person name="Davis P."/>
            <person name="Kerhornou A."/>
            <person name="Nie X."/>
            <person name="Hall N."/>
            <person name="Anjard C."/>
            <person name="Hemphill L."/>
            <person name="Bason N."/>
            <person name="Farbrother P."/>
            <person name="Desany B."/>
            <person name="Just E."/>
            <person name="Morio T."/>
            <person name="Rost R."/>
            <person name="Churcher C.M."/>
            <person name="Cooper J."/>
            <person name="Haydock S."/>
            <person name="van Driessche N."/>
            <person name="Cronin A."/>
            <person name="Goodhead I."/>
            <person name="Muzny D.M."/>
            <person name="Mourier T."/>
            <person name="Pain A."/>
            <person name="Lu M."/>
            <person name="Harper D."/>
            <person name="Lindsay R."/>
            <person name="Hauser H."/>
            <person name="James K.D."/>
            <person name="Quiles M."/>
            <person name="Madan Babu M."/>
            <person name="Saito T."/>
            <person name="Buchrieser C."/>
            <person name="Wardroper A."/>
            <person name="Felder M."/>
            <person name="Thangavelu M."/>
            <person name="Johnson D."/>
            <person name="Knights A."/>
            <person name="Loulseged H."/>
            <person name="Mungall K.L."/>
            <person name="Oliver K."/>
            <person name="Price C."/>
            <person name="Quail M.A."/>
            <person name="Urushihara H."/>
            <person name="Hernandez J."/>
            <person name="Rabbinowitsch E."/>
            <person name="Steffen D."/>
            <person name="Sanders M."/>
            <person name="Ma J."/>
            <person name="Kohara Y."/>
            <person name="Sharp S."/>
            <person name="Simmonds M.N."/>
            <person name="Spiegler S."/>
            <person name="Tivey A."/>
            <person name="Sugano S."/>
            <person name="White B."/>
            <person name="Walker D."/>
            <person name="Woodward J.R."/>
            <person name="Winckler T."/>
            <person name="Tanaka Y."/>
            <person name="Shaulsky G."/>
            <person name="Schleicher M."/>
            <person name="Weinstock G.M."/>
            <person name="Rosenthal A."/>
            <person name="Cox E.C."/>
            <person name="Chisholm R.L."/>
            <person name="Gibbs R.A."/>
            <person name="Loomis W.F."/>
            <person name="Platzer M."/>
            <person name="Kay R.R."/>
            <person name="Williams J.G."/>
            <person name="Dear P.H."/>
            <person name="Noegel A.A."/>
            <person name="Barrell B.G."/>
            <person name="Kuspa A."/>
        </authorList>
    </citation>
    <scope>NUCLEOTIDE SEQUENCE [LARGE SCALE GENOMIC DNA]</scope>
    <source>
        <strain>AX4</strain>
    </source>
</reference>